<accession>P38465</accession>
<organism>
    <name type="scientific">Marchantia polymorpha</name>
    <name type="common">Common liverwort</name>
    <name type="synonym">Marchantia aquatica</name>
    <dbReference type="NCBI Taxonomy" id="3197"/>
    <lineage>
        <taxon>Eukaryota</taxon>
        <taxon>Viridiplantae</taxon>
        <taxon>Streptophyta</taxon>
        <taxon>Embryophyta</taxon>
        <taxon>Marchantiophyta</taxon>
        <taxon>Marchantiopsida</taxon>
        <taxon>Marchantiidae</taxon>
        <taxon>Marchantiales</taxon>
        <taxon>Marchantiaceae</taxon>
        <taxon>Marchantia</taxon>
    </lineage>
</organism>
<geneLocation type="mitochondrion"/>
<reference key="1">
    <citation type="journal article" date="1992" name="J. Mol. Biol.">
        <title>Gene organization deduced from the complete sequence of liverwort Marchantia polymorpha mitochondrial DNA. A primitive form of plant mitochondrial genome.</title>
        <authorList>
            <person name="Oda K."/>
            <person name="Yamato K."/>
            <person name="Ohta E."/>
            <person name="Nakamura Y."/>
            <person name="Takemura M."/>
            <person name="Nozato N."/>
            <person name="Akashi K."/>
            <person name="Kanegae T."/>
            <person name="Ogura Y."/>
            <person name="Kohchi T."/>
            <person name="Ohyama K."/>
        </authorList>
    </citation>
    <scope>NUCLEOTIDE SEQUENCE [GENOMIC DNA]</scope>
</reference>
<proteinExistence type="predicted"/>
<sequence>MEGSIKNCTQCDEASYDILDADSLRTCEALVRQKIDFEEIYIKQHNDRLLFKDMNKVVEVLERKTVLVTLKTYPTRNPH</sequence>
<dbReference type="EMBL" id="M68929">
    <property type="protein sequence ID" value="AAC09411.1"/>
    <property type="molecule type" value="Genomic_DNA"/>
</dbReference>
<dbReference type="PIR" id="S25972">
    <property type="entry name" value="S25972"/>
</dbReference>
<dbReference type="SMR" id="P38465"/>
<dbReference type="GO" id="GO:0005739">
    <property type="term" value="C:mitochondrion"/>
    <property type="evidence" value="ECO:0007669"/>
    <property type="project" value="UniProtKB-SubCell"/>
</dbReference>
<comment type="subcellular location">
    <subcellularLocation>
        <location evidence="1">Mitochondrion</location>
    </subcellularLocation>
</comment>
<keyword id="KW-0496">Mitochondrion</keyword>
<evidence type="ECO:0000305" key="1"/>
<protein>
    <recommendedName>
        <fullName>Uncharacterized mitochondrial protein ymf22</fullName>
    </recommendedName>
    <alternativeName>
        <fullName>ORF79</fullName>
    </alternativeName>
</protein>
<name>YMF22_MARPO</name>
<gene>
    <name type="primary">YMF22</name>
</gene>
<feature type="chain" id="PRO_0000196850" description="Uncharacterized mitochondrial protein ymf22">
    <location>
        <begin position="1"/>
        <end position="79"/>
    </location>
</feature>